<comment type="function">
    <text evidence="1">Required for accurate and efficient protein synthesis under certain stress conditions. May act as a fidelity factor of the translation reaction, by catalyzing a one-codon backward translocation of tRNAs on improperly translocated ribosomes. Back-translocation proceeds from a post-translocation (POST) complex to a pre-translocation (PRE) complex, thus giving elongation factor G a second chance to translocate the tRNAs correctly. Binds to ribosomes in a GTP-dependent manner.</text>
</comment>
<comment type="catalytic activity">
    <reaction evidence="1">
        <text>GTP + H2O = GDP + phosphate + H(+)</text>
        <dbReference type="Rhea" id="RHEA:19669"/>
        <dbReference type="ChEBI" id="CHEBI:15377"/>
        <dbReference type="ChEBI" id="CHEBI:15378"/>
        <dbReference type="ChEBI" id="CHEBI:37565"/>
        <dbReference type="ChEBI" id="CHEBI:43474"/>
        <dbReference type="ChEBI" id="CHEBI:58189"/>
        <dbReference type="EC" id="3.6.5.n1"/>
    </reaction>
</comment>
<comment type="subcellular location">
    <subcellularLocation>
        <location evidence="1">Cell inner membrane</location>
        <topology evidence="1">Peripheral membrane protein</topology>
        <orientation evidence="1">Cytoplasmic side</orientation>
    </subcellularLocation>
</comment>
<comment type="similarity">
    <text evidence="1">Belongs to the TRAFAC class translation factor GTPase superfamily. Classic translation factor GTPase family. LepA subfamily.</text>
</comment>
<accession>Q8F500</accession>
<dbReference type="EC" id="3.6.5.n1" evidence="1"/>
<dbReference type="EMBL" id="AE010300">
    <property type="protein sequence ID" value="AAN49087.1"/>
    <property type="molecule type" value="Genomic_DNA"/>
</dbReference>
<dbReference type="RefSeq" id="NP_712069.1">
    <property type="nucleotide sequence ID" value="NC_004342.2"/>
</dbReference>
<dbReference type="RefSeq" id="WP_001280999.1">
    <property type="nucleotide sequence ID" value="NC_004342.2"/>
</dbReference>
<dbReference type="SMR" id="Q8F500"/>
<dbReference type="FunCoup" id="Q8F500">
    <property type="interactions" value="501"/>
</dbReference>
<dbReference type="STRING" id="189518.LA_1888"/>
<dbReference type="PaxDb" id="189518-LA_1888"/>
<dbReference type="EnsemblBacteria" id="AAN49087">
    <property type="protein sequence ID" value="AAN49087"/>
    <property type="gene ID" value="LA_1888"/>
</dbReference>
<dbReference type="GeneID" id="61141902"/>
<dbReference type="KEGG" id="lil:LA_1888"/>
<dbReference type="PATRIC" id="fig|189518.3.peg.1878"/>
<dbReference type="HOGENOM" id="CLU_009995_3_3_12"/>
<dbReference type="InParanoid" id="Q8F500"/>
<dbReference type="OrthoDB" id="9801591at2"/>
<dbReference type="Proteomes" id="UP000001408">
    <property type="component" value="Chromosome I"/>
</dbReference>
<dbReference type="GO" id="GO:0005886">
    <property type="term" value="C:plasma membrane"/>
    <property type="evidence" value="ECO:0007669"/>
    <property type="project" value="UniProtKB-SubCell"/>
</dbReference>
<dbReference type="GO" id="GO:0005525">
    <property type="term" value="F:GTP binding"/>
    <property type="evidence" value="ECO:0007669"/>
    <property type="project" value="UniProtKB-UniRule"/>
</dbReference>
<dbReference type="GO" id="GO:0003924">
    <property type="term" value="F:GTPase activity"/>
    <property type="evidence" value="ECO:0007669"/>
    <property type="project" value="UniProtKB-UniRule"/>
</dbReference>
<dbReference type="GO" id="GO:0043022">
    <property type="term" value="F:ribosome binding"/>
    <property type="evidence" value="ECO:0000318"/>
    <property type="project" value="GO_Central"/>
</dbReference>
<dbReference type="GO" id="GO:0003746">
    <property type="term" value="F:translation elongation factor activity"/>
    <property type="evidence" value="ECO:0007669"/>
    <property type="project" value="UniProtKB-UniRule"/>
</dbReference>
<dbReference type="GO" id="GO:0045727">
    <property type="term" value="P:positive regulation of translation"/>
    <property type="evidence" value="ECO:0000318"/>
    <property type="project" value="GO_Central"/>
</dbReference>
<dbReference type="CDD" id="cd03699">
    <property type="entry name" value="EF4_II"/>
    <property type="match status" value="1"/>
</dbReference>
<dbReference type="CDD" id="cd16260">
    <property type="entry name" value="EF4_III"/>
    <property type="match status" value="1"/>
</dbReference>
<dbReference type="CDD" id="cd01890">
    <property type="entry name" value="LepA"/>
    <property type="match status" value="1"/>
</dbReference>
<dbReference type="CDD" id="cd03709">
    <property type="entry name" value="lepA_C"/>
    <property type="match status" value="1"/>
</dbReference>
<dbReference type="FunFam" id="3.40.50.300:FF:000078">
    <property type="entry name" value="Elongation factor 4"/>
    <property type="match status" value="1"/>
</dbReference>
<dbReference type="FunFam" id="2.40.30.10:FF:000015">
    <property type="entry name" value="Translation factor GUF1, mitochondrial"/>
    <property type="match status" value="1"/>
</dbReference>
<dbReference type="FunFam" id="3.30.70.240:FF:000007">
    <property type="entry name" value="Translation factor GUF1, mitochondrial"/>
    <property type="match status" value="1"/>
</dbReference>
<dbReference type="FunFam" id="3.30.70.2570:FF:000001">
    <property type="entry name" value="Translation factor GUF1, mitochondrial"/>
    <property type="match status" value="1"/>
</dbReference>
<dbReference type="FunFam" id="3.30.70.870:FF:000004">
    <property type="entry name" value="Translation factor GUF1, mitochondrial"/>
    <property type="match status" value="1"/>
</dbReference>
<dbReference type="Gene3D" id="3.30.70.240">
    <property type="match status" value="1"/>
</dbReference>
<dbReference type="Gene3D" id="3.30.70.2570">
    <property type="entry name" value="Elongation factor 4, C-terminal domain"/>
    <property type="match status" value="1"/>
</dbReference>
<dbReference type="Gene3D" id="3.30.70.870">
    <property type="entry name" value="Elongation Factor G (Translational Gtpase), domain 3"/>
    <property type="match status" value="1"/>
</dbReference>
<dbReference type="Gene3D" id="3.40.50.300">
    <property type="entry name" value="P-loop containing nucleotide triphosphate hydrolases"/>
    <property type="match status" value="1"/>
</dbReference>
<dbReference type="Gene3D" id="2.40.30.10">
    <property type="entry name" value="Translation factors"/>
    <property type="match status" value="1"/>
</dbReference>
<dbReference type="HAMAP" id="MF_00071">
    <property type="entry name" value="LepA"/>
    <property type="match status" value="1"/>
</dbReference>
<dbReference type="InterPro" id="IPR006297">
    <property type="entry name" value="EF-4"/>
</dbReference>
<dbReference type="InterPro" id="IPR035647">
    <property type="entry name" value="EFG_III/V"/>
</dbReference>
<dbReference type="InterPro" id="IPR000640">
    <property type="entry name" value="EFG_V-like"/>
</dbReference>
<dbReference type="InterPro" id="IPR004161">
    <property type="entry name" value="EFTu-like_2"/>
</dbReference>
<dbReference type="InterPro" id="IPR031157">
    <property type="entry name" value="G_TR_CS"/>
</dbReference>
<dbReference type="InterPro" id="IPR038363">
    <property type="entry name" value="LepA_C_sf"/>
</dbReference>
<dbReference type="InterPro" id="IPR013842">
    <property type="entry name" value="LepA_CTD"/>
</dbReference>
<dbReference type="InterPro" id="IPR035654">
    <property type="entry name" value="LepA_IV"/>
</dbReference>
<dbReference type="InterPro" id="IPR027417">
    <property type="entry name" value="P-loop_NTPase"/>
</dbReference>
<dbReference type="InterPro" id="IPR005225">
    <property type="entry name" value="Small_GTP-bd"/>
</dbReference>
<dbReference type="InterPro" id="IPR000795">
    <property type="entry name" value="T_Tr_GTP-bd_dom"/>
</dbReference>
<dbReference type="InterPro" id="IPR009000">
    <property type="entry name" value="Transl_B-barrel_sf"/>
</dbReference>
<dbReference type="NCBIfam" id="TIGR01393">
    <property type="entry name" value="lepA"/>
    <property type="match status" value="1"/>
</dbReference>
<dbReference type="NCBIfam" id="TIGR00231">
    <property type="entry name" value="small_GTP"/>
    <property type="match status" value="1"/>
</dbReference>
<dbReference type="PANTHER" id="PTHR43512:SF4">
    <property type="entry name" value="TRANSLATION FACTOR GUF1 HOMOLOG, CHLOROPLASTIC"/>
    <property type="match status" value="1"/>
</dbReference>
<dbReference type="PANTHER" id="PTHR43512">
    <property type="entry name" value="TRANSLATION FACTOR GUF1-RELATED"/>
    <property type="match status" value="1"/>
</dbReference>
<dbReference type="Pfam" id="PF00679">
    <property type="entry name" value="EFG_C"/>
    <property type="match status" value="1"/>
</dbReference>
<dbReference type="Pfam" id="PF00009">
    <property type="entry name" value="GTP_EFTU"/>
    <property type="match status" value="1"/>
</dbReference>
<dbReference type="Pfam" id="PF03144">
    <property type="entry name" value="GTP_EFTU_D2"/>
    <property type="match status" value="1"/>
</dbReference>
<dbReference type="Pfam" id="PF06421">
    <property type="entry name" value="LepA_C"/>
    <property type="match status" value="1"/>
</dbReference>
<dbReference type="PRINTS" id="PR00315">
    <property type="entry name" value="ELONGATNFCT"/>
</dbReference>
<dbReference type="SMART" id="SM00838">
    <property type="entry name" value="EFG_C"/>
    <property type="match status" value="1"/>
</dbReference>
<dbReference type="SUPFAM" id="SSF54980">
    <property type="entry name" value="EF-G C-terminal domain-like"/>
    <property type="match status" value="2"/>
</dbReference>
<dbReference type="SUPFAM" id="SSF52540">
    <property type="entry name" value="P-loop containing nucleoside triphosphate hydrolases"/>
    <property type="match status" value="1"/>
</dbReference>
<dbReference type="SUPFAM" id="SSF50447">
    <property type="entry name" value="Translation proteins"/>
    <property type="match status" value="1"/>
</dbReference>
<dbReference type="PROSITE" id="PS00301">
    <property type="entry name" value="G_TR_1"/>
    <property type="match status" value="1"/>
</dbReference>
<dbReference type="PROSITE" id="PS51722">
    <property type="entry name" value="G_TR_2"/>
    <property type="match status" value="1"/>
</dbReference>
<protein>
    <recommendedName>
        <fullName evidence="1">Elongation factor 4</fullName>
        <shortName evidence="1">EF-4</shortName>
        <ecNumber evidence="1">3.6.5.n1</ecNumber>
    </recommendedName>
    <alternativeName>
        <fullName evidence="1">Ribosomal back-translocase LepA</fullName>
    </alternativeName>
</protein>
<proteinExistence type="inferred from homology"/>
<keyword id="KW-0997">Cell inner membrane</keyword>
<keyword id="KW-1003">Cell membrane</keyword>
<keyword id="KW-0342">GTP-binding</keyword>
<keyword id="KW-0378">Hydrolase</keyword>
<keyword id="KW-0472">Membrane</keyword>
<keyword id="KW-0547">Nucleotide-binding</keyword>
<keyword id="KW-0648">Protein biosynthesis</keyword>
<keyword id="KW-1185">Reference proteome</keyword>
<gene>
    <name evidence="1" type="primary">lepA</name>
    <name type="ordered locus">LA_1888</name>
</gene>
<name>LEPA_LEPIN</name>
<reference key="1">
    <citation type="journal article" date="2003" name="Nature">
        <title>Unique physiological and pathogenic features of Leptospira interrogans revealed by whole-genome sequencing.</title>
        <authorList>
            <person name="Ren S.-X."/>
            <person name="Fu G."/>
            <person name="Jiang X.-G."/>
            <person name="Zeng R."/>
            <person name="Miao Y.-G."/>
            <person name="Xu H."/>
            <person name="Zhang Y.-X."/>
            <person name="Xiong H."/>
            <person name="Lu G."/>
            <person name="Lu L.-F."/>
            <person name="Jiang H.-Q."/>
            <person name="Jia J."/>
            <person name="Tu Y.-F."/>
            <person name="Jiang J.-X."/>
            <person name="Gu W.-Y."/>
            <person name="Zhang Y.-Q."/>
            <person name="Cai Z."/>
            <person name="Sheng H.-H."/>
            <person name="Yin H.-F."/>
            <person name="Zhang Y."/>
            <person name="Zhu G.-F."/>
            <person name="Wan M."/>
            <person name="Huang H.-L."/>
            <person name="Qian Z."/>
            <person name="Wang S.-Y."/>
            <person name="Ma W."/>
            <person name="Yao Z.-J."/>
            <person name="Shen Y."/>
            <person name="Qiang B.-Q."/>
            <person name="Xia Q.-C."/>
            <person name="Guo X.-K."/>
            <person name="Danchin A."/>
            <person name="Saint Girons I."/>
            <person name="Somerville R.L."/>
            <person name="Wen Y.-M."/>
            <person name="Shi M.-H."/>
            <person name="Chen Z."/>
            <person name="Xu J.-G."/>
            <person name="Zhao G.-P."/>
        </authorList>
    </citation>
    <scope>NUCLEOTIDE SEQUENCE [LARGE SCALE GENOMIC DNA]</scope>
    <source>
        <strain>56601</strain>
    </source>
</reference>
<sequence>MSDKQQFIRNFSIIAHIDHGKSTLADRLLEIGQVTNDRTKKDQILDSMDIERERGITIKANNATFDYLAEDGNTYIMNLLDTPGHVDFTYEVSRSLKACEGVLLIVDASQGVEAQTLANLYLAMEQDLEILPVMNKIDLPAADVEKTKIQIEESLGLDPQKAVAISAKTGLNVKEVLEQITKQIPSPKGNSNAPLKALVYDSYFDPYMGVVIKIRIFDGRIKKGDRILMMSTGKDFTVNEVGINRINLTPKESLETGEVGYIIAGIKKVSDAKTGDTVTLFSNPTKESVPGYKEAKPMVFAGLFPINGEQFDELVDAIEKLKLNDAALVFEKESSIALGFGFRVGYLGLLHMEIVQERLEREFNLDLITTAPSVKYIIRSKNGEVEEIDNPSRFPEPITIESTEEPYVKATVITPNEYVGNIMSLAMDKRGIQLDTVYLTQDKVQLTYEIPLAELIFEFYDKLKSFTRGYASLDYEPSGYKASQLVKMDILVNGEPVDALSMIVHRSKAEQRGREIIEKLKDLIPRHQFMIPLQAAVGGKILARESISALRKNVTAKCYGGDITRKKKLLEKQKEGKKRMKQIGNVEIPQEAFLAVLKTS</sequence>
<evidence type="ECO:0000255" key="1">
    <source>
        <dbReference type="HAMAP-Rule" id="MF_00071"/>
    </source>
</evidence>
<feature type="chain" id="PRO_0000176290" description="Elongation factor 4">
    <location>
        <begin position="1"/>
        <end position="600"/>
    </location>
</feature>
<feature type="domain" description="tr-type G">
    <location>
        <begin position="6"/>
        <end position="188"/>
    </location>
</feature>
<feature type="binding site" evidence="1">
    <location>
        <begin position="18"/>
        <end position="23"/>
    </location>
    <ligand>
        <name>GTP</name>
        <dbReference type="ChEBI" id="CHEBI:37565"/>
    </ligand>
</feature>
<feature type="binding site" evidence="1">
    <location>
        <begin position="135"/>
        <end position="138"/>
    </location>
    <ligand>
        <name>GTP</name>
        <dbReference type="ChEBI" id="CHEBI:37565"/>
    </ligand>
</feature>
<organism>
    <name type="scientific">Leptospira interrogans serogroup Icterohaemorrhagiae serovar Lai (strain 56601)</name>
    <dbReference type="NCBI Taxonomy" id="189518"/>
    <lineage>
        <taxon>Bacteria</taxon>
        <taxon>Pseudomonadati</taxon>
        <taxon>Spirochaetota</taxon>
        <taxon>Spirochaetia</taxon>
        <taxon>Leptospirales</taxon>
        <taxon>Leptospiraceae</taxon>
        <taxon>Leptospira</taxon>
    </lineage>
</organism>